<reference key="1">
    <citation type="journal article" date="2000" name="J. Cell Biol.">
        <title>The plant vacuolar sorting receptor AtELP is involved in transport of NH(2)-terminal propeptide-containing vacuolar proteins in Arabidopsis thaliana.</title>
        <authorList>
            <person name="Ahmed S.U."/>
            <person name="Rojo E."/>
            <person name="Kovaleva V."/>
            <person name="Venkataraman S."/>
            <person name="Dombrowski J.E."/>
            <person name="Matsuoka K."/>
            <person name="Raikhel N.V."/>
        </authorList>
    </citation>
    <scope>NUCLEOTIDE SEQUENCE [MRNA]</scope>
    <scope>SUBCELLULAR LOCATION</scope>
    <scope>INTERACTION WITH VSR1</scope>
</reference>
<reference key="2">
    <citation type="submission" date="1998-08" db="EMBL/GenBank/DDBJ databases">
        <title>Signal peptide selection derived cDNAs from Arabidopsis thaliana leaves and guard cells.</title>
        <authorList>
            <person name="Stracke R."/>
            <person name="Palme K."/>
        </authorList>
    </citation>
    <scope>NUCLEOTIDE SEQUENCE [LARGE SCALE MRNA]</scope>
</reference>
<reference key="3">
    <citation type="journal article" date="1998" name="DNA Res.">
        <title>Structural analysis of Arabidopsis thaliana chromosome 5. V. Sequence features of the regions of 1,381,565 bp covered by twenty one physically assigned P1 and TAC clones.</title>
        <authorList>
            <person name="Kaneko T."/>
            <person name="Kotani H."/>
            <person name="Nakamura Y."/>
            <person name="Sato S."/>
            <person name="Asamizu E."/>
            <person name="Miyajima N."/>
            <person name="Tabata S."/>
        </authorList>
    </citation>
    <scope>NUCLEOTIDE SEQUENCE [LARGE SCALE GENOMIC DNA]</scope>
    <source>
        <strain>cv. Columbia</strain>
    </source>
</reference>
<reference key="4">
    <citation type="journal article" date="2017" name="Plant J.">
        <title>Araport11: a complete reannotation of the Arabidopsis thaliana reference genome.</title>
        <authorList>
            <person name="Cheng C.Y."/>
            <person name="Krishnakumar V."/>
            <person name="Chan A.P."/>
            <person name="Thibaud-Nissen F."/>
            <person name="Schobel S."/>
            <person name="Town C.D."/>
        </authorList>
    </citation>
    <scope>GENOME REANNOTATION</scope>
    <source>
        <strain>cv. Columbia</strain>
    </source>
</reference>
<reference key="5">
    <citation type="journal article" date="2003" name="Science">
        <title>Empirical analysis of transcriptional activity in the Arabidopsis genome.</title>
        <authorList>
            <person name="Yamada K."/>
            <person name="Lim J."/>
            <person name="Dale J.M."/>
            <person name="Chen H."/>
            <person name="Shinn P."/>
            <person name="Palm C.J."/>
            <person name="Southwick A.M."/>
            <person name="Wu H.C."/>
            <person name="Kim C.J."/>
            <person name="Nguyen M."/>
            <person name="Pham P.K."/>
            <person name="Cheuk R.F."/>
            <person name="Karlin-Newmann G."/>
            <person name="Liu S.X."/>
            <person name="Lam B."/>
            <person name="Sakano H."/>
            <person name="Wu T."/>
            <person name="Yu G."/>
            <person name="Miranda M."/>
            <person name="Quach H.L."/>
            <person name="Tripp M."/>
            <person name="Chang C.H."/>
            <person name="Lee J.M."/>
            <person name="Toriumi M.J."/>
            <person name="Chan M.M."/>
            <person name="Tang C.C."/>
            <person name="Onodera C.S."/>
            <person name="Deng J.M."/>
            <person name="Akiyama K."/>
            <person name="Ansari Y."/>
            <person name="Arakawa T."/>
            <person name="Banh J."/>
            <person name="Banno F."/>
            <person name="Bowser L."/>
            <person name="Brooks S.Y."/>
            <person name="Carninci P."/>
            <person name="Chao Q."/>
            <person name="Choy N."/>
            <person name="Enju A."/>
            <person name="Goldsmith A.D."/>
            <person name="Gurjal M."/>
            <person name="Hansen N.F."/>
            <person name="Hayashizaki Y."/>
            <person name="Johnson-Hopson C."/>
            <person name="Hsuan V.W."/>
            <person name="Iida K."/>
            <person name="Karnes M."/>
            <person name="Khan S."/>
            <person name="Koesema E."/>
            <person name="Ishida J."/>
            <person name="Jiang P.X."/>
            <person name="Jones T."/>
            <person name="Kawai J."/>
            <person name="Kamiya A."/>
            <person name="Meyers C."/>
            <person name="Nakajima M."/>
            <person name="Narusaka M."/>
            <person name="Seki M."/>
            <person name="Sakurai T."/>
            <person name="Satou M."/>
            <person name="Tamse R."/>
            <person name="Vaysberg M."/>
            <person name="Wallender E.K."/>
            <person name="Wong C."/>
            <person name="Yamamura Y."/>
            <person name="Yuan S."/>
            <person name="Shinozaki K."/>
            <person name="Davis R.W."/>
            <person name="Theologis A."/>
            <person name="Ecker J.R."/>
        </authorList>
    </citation>
    <scope>NUCLEOTIDE SEQUENCE [LARGE SCALE MRNA]</scope>
    <source>
        <strain>cv. Columbia</strain>
    </source>
</reference>
<reference key="6">
    <citation type="submission" date="2002-03" db="EMBL/GenBank/DDBJ databases">
        <title>Full-length cDNA from Arabidopsis thaliana.</title>
        <authorList>
            <person name="Brover V.V."/>
            <person name="Troukhan M.E."/>
            <person name="Alexandrov N.A."/>
            <person name="Lu Y.-P."/>
            <person name="Flavell R.B."/>
            <person name="Feldmann K.A."/>
        </authorList>
    </citation>
    <scope>NUCLEOTIDE SEQUENCE [LARGE SCALE MRNA]</scope>
</reference>
<reference key="7">
    <citation type="journal article" date="1993" name="Plant Cell">
        <title>Developmental and age-related processes that influence the longevity and senescence of photosynthetic tissues in Arabidopsis.</title>
        <authorList>
            <person name="Hensel L.L."/>
            <person name="Grbic V."/>
            <person name="Baumgarten D.A."/>
            <person name="Bleecker A.B."/>
        </authorList>
    </citation>
    <scope>NUCLEOTIDE SEQUENCE [MRNA] OF 137-231</scope>
    <scope>INDUCTION</scope>
    <scope>TISSUE SPECIFICITY</scope>
    <source>
        <strain>cv. Landsberg erecta</strain>
        <tissue>Leaf</tissue>
    </source>
</reference>
<reference key="8">
    <citation type="journal article" date="1997" name="Plant J.">
        <title>Monoclonal antibodies to barley aleurain and homologs from other plants.</title>
        <authorList>
            <person name="Rogers S.W."/>
            <person name="Burks M."/>
            <person name="Rogers J.C."/>
        </authorList>
    </citation>
    <scope>TISSUE SPECIFICITY</scope>
</reference>
<reference key="9">
    <citation type="journal article" date="1998" name="Plant Mol. Biol.">
        <title>A comparison of the expression patterns of several senescence-associated genes in response to stress and hormone treatment.</title>
        <authorList>
            <person name="Weaver L.M."/>
            <person name="Gan S."/>
            <person name="Quirino B."/>
            <person name="Amasino R.M."/>
        </authorList>
    </citation>
    <scope>INDUCTION</scope>
</reference>
<reference key="10">
    <citation type="journal article" date="2003" name="J. Exp. Bot.">
        <title>Vacuolar system distribution in Arabidopsis tissues, visualized using GFP fusion proteins.</title>
        <authorList>
            <person name="Flueckiger R."/>
            <person name="De Caroli M."/>
            <person name="Piro G."/>
            <person name="Dalessandro G."/>
            <person name="Neuhaus J.-M."/>
            <person name="Di Sansebastiano G.-P."/>
        </authorList>
    </citation>
    <scope>SUBCELLULAR LOCATION</scope>
</reference>
<reference key="11">
    <citation type="journal article" date="2003" name="Plant J.">
        <title>Large-scale identification of leaf senescence-associated genes.</title>
        <authorList>
            <person name="Gepstein S."/>
            <person name="Sabehi G."/>
            <person name="Carp M.-J."/>
            <person name="Hajouj T."/>
            <person name="Nesher M.F.O."/>
            <person name="Yariv I."/>
            <person name="Dor C."/>
            <person name="Bassani M."/>
        </authorList>
    </citation>
    <scope>INDUCTION</scope>
</reference>
<dbReference type="EC" id="3.4.22.16" evidence="17"/>
<dbReference type="EMBL" id="AF233883">
    <property type="protein sequence ID" value="AAF43041.1"/>
    <property type="molecule type" value="mRNA"/>
</dbReference>
<dbReference type="EMBL" id="AF083703">
    <property type="protein sequence ID" value="AAN60262.1"/>
    <property type="molecule type" value="mRNA"/>
</dbReference>
<dbReference type="EMBL" id="AB011483">
    <property type="protein sequence ID" value="BAB08221.1"/>
    <property type="molecule type" value="Genomic_DNA"/>
</dbReference>
<dbReference type="EMBL" id="CP002688">
    <property type="protein sequence ID" value="AED97313.1"/>
    <property type="molecule type" value="Genomic_DNA"/>
</dbReference>
<dbReference type="EMBL" id="AF360273">
    <property type="protein sequence ID" value="AAK25983.1"/>
    <property type="molecule type" value="mRNA"/>
</dbReference>
<dbReference type="EMBL" id="BT000673">
    <property type="protein sequence ID" value="AAN31819.1"/>
    <property type="molecule type" value="mRNA"/>
</dbReference>
<dbReference type="EMBL" id="BT000674">
    <property type="protein sequence ID" value="AAN31820.1"/>
    <property type="molecule type" value="mRNA"/>
</dbReference>
<dbReference type="EMBL" id="BT000676">
    <property type="protein sequence ID" value="AAN31822.1"/>
    <property type="molecule type" value="mRNA"/>
</dbReference>
<dbReference type="EMBL" id="AY088662">
    <property type="protein sequence ID" value="AAM66984.1"/>
    <property type="molecule type" value="mRNA"/>
</dbReference>
<dbReference type="PIR" id="PQ0650">
    <property type="entry name" value="PQ0650"/>
</dbReference>
<dbReference type="RefSeq" id="NP_568921.1">
    <molecule id="Q8H166-1"/>
    <property type="nucleotide sequence ID" value="NM_125429.4"/>
</dbReference>
<dbReference type="SMR" id="Q8H166"/>
<dbReference type="BioGRID" id="21402">
    <property type="interactions" value="2"/>
</dbReference>
<dbReference type="FunCoup" id="Q8H166">
    <property type="interactions" value="1142"/>
</dbReference>
<dbReference type="IntAct" id="Q8H166">
    <property type="interactions" value="1"/>
</dbReference>
<dbReference type="STRING" id="3702.Q8H166"/>
<dbReference type="MEROPS" id="C01.163"/>
<dbReference type="MEROPS" id="I29.003"/>
<dbReference type="GlyCosmos" id="Q8H166">
    <property type="glycosylation" value="2 sites, No reported glycans"/>
</dbReference>
<dbReference type="GlyGen" id="Q8H166">
    <property type="glycosylation" value="2 sites"/>
</dbReference>
<dbReference type="PaxDb" id="3702-AT5G60360.3"/>
<dbReference type="ProteomicsDB" id="244854">
    <molecule id="Q8H166-1"/>
</dbReference>
<dbReference type="EnsemblPlants" id="AT5G60360.1">
    <molecule id="Q8H166-1"/>
    <property type="protein sequence ID" value="AT5G60360.1"/>
    <property type="gene ID" value="AT5G60360"/>
</dbReference>
<dbReference type="GeneID" id="836158"/>
<dbReference type="Gramene" id="AT5G60360.1">
    <molecule id="Q8H166-1"/>
    <property type="protein sequence ID" value="AT5G60360.1"/>
    <property type="gene ID" value="AT5G60360"/>
</dbReference>
<dbReference type="KEGG" id="ath:AT5G60360"/>
<dbReference type="Araport" id="AT5G60360"/>
<dbReference type="TAIR" id="AT5G60360">
    <property type="gene designation" value="ALP"/>
</dbReference>
<dbReference type="eggNOG" id="KOG1543">
    <property type="taxonomic scope" value="Eukaryota"/>
</dbReference>
<dbReference type="HOGENOM" id="CLU_012184_1_2_1"/>
<dbReference type="InParanoid" id="Q8H166"/>
<dbReference type="OMA" id="TCKFQPQ"/>
<dbReference type="OrthoDB" id="10253408at2759"/>
<dbReference type="PhylomeDB" id="Q8H166"/>
<dbReference type="PRO" id="PR:Q8H166"/>
<dbReference type="Proteomes" id="UP000006548">
    <property type="component" value="Chromosome 5"/>
</dbReference>
<dbReference type="ExpressionAtlas" id="Q8H166">
    <property type="expression patterns" value="baseline and differential"/>
</dbReference>
<dbReference type="GO" id="GO:0005773">
    <property type="term" value="C:vacuole"/>
    <property type="evidence" value="ECO:0007669"/>
    <property type="project" value="UniProtKB-SubCell"/>
</dbReference>
<dbReference type="GO" id="GO:0004197">
    <property type="term" value="F:cysteine-type endopeptidase activity"/>
    <property type="evidence" value="ECO:0007669"/>
    <property type="project" value="UniProtKB-EC"/>
</dbReference>
<dbReference type="GO" id="GO:0006508">
    <property type="term" value="P:proteolysis"/>
    <property type="evidence" value="ECO:0007669"/>
    <property type="project" value="UniProtKB-KW"/>
</dbReference>
<dbReference type="CDD" id="cd02248">
    <property type="entry name" value="Peptidase_C1A"/>
    <property type="match status" value="1"/>
</dbReference>
<dbReference type="FunFam" id="3.90.70.10:FF:000039">
    <property type="entry name" value="Cysteine proteinase 2, putative"/>
    <property type="match status" value="1"/>
</dbReference>
<dbReference type="Gene3D" id="3.90.70.10">
    <property type="entry name" value="Cysteine proteinases"/>
    <property type="match status" value="1"/>
</dbReference>
<dbReference type="InterPro" id="IPR038765">
    <property type="entry name" value="Papain-like_cys_pep_sf"/>
</dbReference>
<dbReference type="InterPro" id="IPR025661">
    <property type="entry name" value="Pept_asp_AS"/>
</dbReference>
<dbReference type="InterPro" id="IPR000169">
    <property type="entry name" value="Pept_cys_AS"/>
</dbReference>
<dbReference type="InterPro" id="IPR025660">
    <property type="entry name" value="Pept_his_AS"/>
</dbReference>
<dbReference type="InterPro" id="IPR013128">
    <property type="entry name" value="Peptidase_C1A"/>
</dbReference>
<dbReference type="InterPro" id="IPR000668">
    <property type="entry name" value="Peptidase_C1A_C"/>
</dbReference>
<dbReference type="InterPro" id="IPR039417">
    <property type="entry name" value="Peptidase_C1A_papain-like"/>
</dbReference>
<dbReference type="InterPro" id="IPR013201">
    <property type="entry name" value="Prot_inhib_I29"/>
</dbReference>
<dbReference type="PANTHER" id="PTHR12411">
    <property type="entry name" value="CYSTEINE PROTEASE FAMILY C1-RELATED"/>
    <property type="match status" value="1"/>
</dbReference>
<dbReference type="Pfam" id="PF08246">
    <property type="entry name" value="Inhibitor_I29"/>
    <property type="match status" value="1"/>
</dbReference>
<dbReference type="Pfam" id="PF00112">
    <property type="entry name" value="Peptidase_C1"/>
    <property type="match status" value="1"/>
</dbReference>
<dbReference type="PRINTS" id="PR00705">
    <property type="entry name" value="PAPAIN"/>
</dbReference>
<dbReference type="SMART" id="SM00848">
    <property type="entry name" value="Inhibitor_I29"/>
    <property type="match status" value="1"/>
</dbReference>
<dbReference type="SMART" id="SM00645">
    <property type="entry name" value="Pept_C1"/>
    <property type="match status" value="1"/>
</dbReference>
<dbReference type="SUPFAM" id="SSF54001">
    <property type="entry name" value="Cysteine proteinases"/>
    <property type="match status" value="1"/>
</dbReference>
<dbReference type="PROSITE" id="PS00640">
    <property type="entry name" value="THIOL_PROTEASE_ASN"/>
    <property type="match status" value="1"/>
</dbReference>
<dbReference type="PROSITE" id="PS00139">
    <property type="entry name" value="THIOL_PROTEASE_CYS"/>
    <property type="match status" value="1"/>
</dbReference>
<dbReference type="PROSITE" id="PS00639">
    <property type="entry name" value="THIOL_PROTEASE_HIS"/>
    <property type="match status" value="1"/>
</dbReference>
<keyword id="KW-0025">Alternative splicing</keyword>
<keyword id="KW-1015">Disulfide bond</keyword>
<keyword id="KW-0325">Glycoprotein</keyword>
<keyword id="KW-0378">Hydrolase</keyword>
<keyword id="KW-0645">Protease</keyword>
<keyword id="KW-1185">Reference proteome</keyword>
<keyword id="KW-0732">Signal</keyword>
<keyword id="KW-0788">Thiol protease</keyword>
<keyword id="KW-0926">Vacuole</keyword>
<keyword id="KW-0865">Zymogen</keyword>
<proteinExistence type="evidence at protein level"/>
<name>ALEU_ARATH</name>
<comment type="function">
    <text>May play a role in proteolysis leading to mobilization of nitrogen during senescence and starvation.</text>
</comment>
<comment type="catalytic activity">
    <reaction evidence="17">
        <text>Hydrolysis of proteins, acting as an aminopeptidase (notably, cleaving Arg-|-Xaa bonds) as well as an endopeptidase.</text>
        <dbReference type="EC" id="3.4.22.16"/>
    </reaction>
</comment>
<comment type="subunit">
    <text evidence="9">Interacts with VSR1/BP80B.</text>
</comment>
<comment type="subcellular location">
    <subcellularLocation>
        <location evidence="9 10">Vacuole</location>
    </subcellularLocation>
    <text>Predominantly vacuolar. From the Golgi apparatus, transported to the lytic vacuole (LV) in clathrin-coated vesicles (CCVs) via the prevacuolar compartment (PVC). In root elongating cells and stomata, localized in central vacuole and in small compartments (LVs, PVCs, Golgi bodies or small vacuoles). Limited to central vacuole in root elongated cells, leaf epidermal cells and trichomes of the lower face of the leaf blade. Limited to small compartments in root cap and apex cells, hypocotyl parenchyma cells and trichomes of the upper face of the leaf blade.</text>
</comment>
<comment type="alternative products">
    <event type="alternative splicing"/>
    <isoform>
        <id>Q8H166-1</id>
        <name>1</name>
        <sequence type="displayed"/>
    </isoform>
    <text>A number of isoforms are produced. According to EST sequences.</text>
</comment>
<comment type="tissue specificity">
    <text evidence="12 13">Expressed in leaves (at protein level).</text>
</comment>
<comment type="induction">
    <text evidence="11 12 14">Induced during senescence. Strongly induced by ethylene and slightly by abscisic acid. Repressed by cytokinin and darkness. Seems to be not affected by dehydration.</text>
</comment>
<comment type="similarity">
    <text evidence="6 7 8">Belongs to the peptidase C1 family.</text>
</comment>
<evidence type="ECO:0000250" key="1">
    <source>
        <dbReference type="UniProtKB" id="P00785"/>
    </source>
</evidence>
<evidence type="ECO:0000250" key="2">
    <source>
        <dbReference type="UniProtKB" id="P07858"/>
    </source>
</evidence>
<evidence type="ECO:0000250" key="3">
    <source>
        <dbReference type="UniProtKB" id="P25250"/>
    </source>
</evidence>
<evidence type="ECO:0000255" key="4"/>
<evidence type="ECO:0000255" key="5">
    <source>
        <dbReference type="PROSITE-ProRule" id="PRU00498"/>
    </source>
</evidence>
<evidence type="ECO:0000255" key="6">
    <source>
        <dbReference type="PROSITE-ProRule" id="PRU10088"/>
    </source>
</evidence>
<evidence type="ECO:0000255" key="7">
    <source>
        <dbReference type="PROSITE-ProRule" id="PRU10089"/>
    </source>
</evidence>
<evidence type="ECO:0000255" key="8">
    <source>
        <dbReference type="PROSITE-ProRule" id="PRU10090"/>
    </source>
</evidence>
<evidence type="ECO:0000269" key="9">
    <source>
    </source>
</evidence>
<evidence type="ECO:0000269" key="10">
    <source>
    </source>
</evidence>
<evidence type="ECO:0000269" key="11">
    <source>
    </source>
</evidence>
<evidence type="ECO:0000269" key="12">
    <source>
    </source>
</evidence>
<evidence type="ECO:0000269" key="13">
    <source>
    </source>
</evidence>
<evidence type="ECO:0000269" key="14">
    <source>
    </source>
</evidence>
<evidence type="ECO:0000303" key="15">
    <source>
    </source>
</evidence>
<evidence type="ECO:0000303" key="16">
    <source>
    </source>
</evidence>
<evidence type="ECO:0000305" key="17"/>
<evidence type="ECO:0000312" key="18">
    <source>
        <dbReference type="Araport" id="AT5G60360"/>
    </source>
</evidence>
<evidence type="ECO:0000312" key="19">
    <source>
        <dbReference type="EMBL" id="BAB08221.1"/>
    </source>
</evidence>
<sequence>MSAKTILSSVVLVVLVAASAAANIGFDESNPIRMVSDGLREVEESVSQILGQSRHVLSFARFTHRYGKKYQNVEEMKLRFSIFKENLDLIRSTNKKGLSYKLGVNQFADLTWQEFQRTKLGAAQNCSATLKGSHKVTEAALPETKDWREDGIVSPVKDQGGCGSCWTFSTTGALEAAYHQAFGKGISLSEQQLVDCAGAFNNYGCNGGLPSQAFEYIKSNGGLDTEKAYPYTGKDETCKFSAENVGVQVLNSVNITLGAEDELKHAVGLVRPVSIAFEVIHSFRLYKSGVYTDSHCGSTPMDVNHAVLAVGYGVEDGVPYWLIKNSWGADWGDKGYFKMEMGKNMCGIATCASYPVVA</sequence>
<gene>
    <name evidence="15" type="primary">ALEU</name>
    <name type="synonym">AALP</name>
    <name evidence="16" type="synonym">SAG2</name>
    <name evidence="18" type="ordered locus">At5g60360</name>
    <name evidence="19" type="ORF">MUF9.1</name>
</gene>
<feature type="signal peptide" evidence="4">
    <location>
        <begin position="1"/>
        <end position="21"/>
    </location>
</feature>
<feature type="propeptide" id="PRO_0000026414" description="Activation peptide" evidence="1">
    <location>
        <begin position="22"/>
        <end position="140"/>
    </location>
</feature>
<feature type="chain" id="PRO_0000026415" description="Thiol protease aleurain">
    <location>
        <begin position="141"/>
        <end position="358"/>
    </location>
</feature>
<feature type="region of interest" description="Interaction with VSR1" evidence="9">
    <location>
        <begin position="22"/>
        <end position="42"/>
    </location>
</feature>
<feature type="active site" evidence="6">
    <location>
        <position position="165"/>
    </location>
</feature>
<feature type="active site" evidence="7">
    <location>
        <position position="305"/>
    </location>
</feature>
<feature type="active site" evidence="8">
    <location>
        <position position="325"/>
    </location>
</feature>
<feature type="glycosylation site" description="N-linked (GlcNAc...) asparagine" evidence="5">
    <location>
        <position position="125"/>
    </location>
</feature>
<feature type="glycosylation site" description="N-linked (GlcNAc...) asparagine" evidence="5">
    <location>
        <position position="254"/>
    </location>
</feature>
<feature type="disulfide bond" evidence="2">
    <location>
        <begin position="162"/>
        <end position="205"/>
    </location>
</feature>
<feature type="disulfide bond" evidence="3">
    <location>
        <begin position="196"/>
        <end position="238"/>
    </location>
</feature>
<feature type="disulfide bond" evidence="3">
    <location>
        <begin position="296"/>
        <end position="346"/>
    </location>
</feature>
<feature type="sequence conflict" description="In Ref. 5; AAN31820." evidence="17" ref="5">
    <original>V</original>
    <variation>F</variation>
    <location>
        <position position="16"/>
    </location>
</feature>
<feature type="sequence conflict" description="In Ref. 7." evidence="17" ref="7">
    <original>W</original>
    <variation>V</variation>
    <location>
        <position position="166"/>
    </location>
</feature>
<feature type="sequence conflict" description="In Ref. 7." evidence="17" ref="7">
    <original>C</original>
    <variation>S</variation>
    <location>
        <position position="205"/>
    </location>
</feature>
<feature type="sequence conflict" description="In Ref. 7." evidence="17" ref="7">
    <original>P</original>
    <variation>R</variation>
    <location>
        <position position="230"/>
    </location>
</feature>
<accession>Q8H166</accession>
<accession>Q9LL83</accession>
<accession>Q9S9A9</accession>
<organism>
    <name type="scientific">Arabidopsis thaliana</name>
    <name type="common">Mouse-ear cress</name>
    <dbReference type="NCBI Taxonomy" id="3702"/>
    <lineage>
        <taxon>Eukaryota</taxon>
        <taxon>Viridiplantae</taxon>
        <taxon>Streptophyta</taxon>
        <taxon>Embryophyta</taxon>
        <taxon>Tracheophyta</taxon>
        <taxon>Spermatophyta</taxon>
        <taxon>Magnoliopsida</taxon>
        <taxon>eudicotyledons</taxon>
        <taxon>Gunneridae</taxon>
        <taxon>Pentapetalae</taxon>
        <taxon>rosids</taxon>
        <taxon>malvids</taxon>
        <taxon>Brassicales</taxon>
        <taxon>Brassicaceae</taxon>
        <taxon>Camelineae</taxon>
        <taxon>Arabidopsis</taxon>
    </lineage>
</organism>
<protein>
    <recommendedName>
        <fullName evidence="15">Thiol protease aleurain</fullName>
        <shortName evidence="15">AtALEU</shortName>
        <ecNumber evidence="17">3.4.22.16</ecNumber>
    </recommendedName>
    <alternativeName>
        <fullName evidence="16">Senescence-associated gene product 2</fullName>
    </alternativeName>
</protein>